<accession>Q65218</accession>
<sequence>MDINPLLYLQAFNNDATTFNTQGHLLEQQSDSPYFDTFANAMQAYLDTKRGGNDEEGTIIIMDDEDFNDSESLEDFLQMLNDEELNDEFSSDDEPEERVNFHEVNHHEVNHHKINHHEVNHHKINQHEPSENPQATFDITEFIKTEDEED</sequence>
<organism>
    <name type="scientific">African swine fever virus (isolate Tick/Malawi/Lil 20-1/1983)</name>
    <name type="common">ASFV</name>
    <dbReference type="NCBI Taxonomy" id="10500"/>
    <lineage>
        <taxon>Viruses</taxon>
        <taxon>Varidnaviria</taxon>
        <taxon>Bamfordvirae</taxon>
        <taxon>Nucleocytoviricota</taxon>
        <taxon>Pokkesviricetes</taxon>
        <taxon>Asfuvirales</taxon>
        <taxon>Asfarviridae</taxon>
        <taxon>Asfivirus</taxon>
        <taxon>African swine fever virus</taxon>
    </lineage>
</organism>
<keyword id="KW-0677">Repeat</keyword>
<proteinExistence type="inferred from homology"/>
<feature type="chain" id="PRO_0000373758" description="Uncharacterized protein D129L">
    <location>
        <begin position="1"/>
        <end position="150"/>
    </location>
</feature>
<feature type="repeat" description="1">
    <location>
        <begin position="101"/>
        <end position="105"/>
    </location>
</feature>
<feature type="repeat" description="2">
    <location>
        <begin position="106"/>
        <end position="110"/>
    </location>
</feature>
<feature type="repeat" description="3">
    <location>
        <begin position="111"/>
        <end position="115"/>
    </location>
</feature>
<feature type="repeat" description="4">
    <location>
        <begin position="116"/>
        <end position="120"/>
    </location>
</feature>
<feature type="repeat" description="5">
    <location>
        <begin position="121"/>
        <end position="125"/>
    </location>
</feature>
<feature type="region of interest" description="5 X 5 AA tandem repeats of [FH]-H-[EK]-[IV]-N">
    <location>
        <begin position="101"/>
        <end position="125"/>
    </location>
</feature>
<evidence type="ECO:0000305" key="1"/>
<comment type="similarity">
    <text evidence="1">Belongs to the asfivirus D129L family.</text>
</comment>
<comment type="sequence caution" evidence="1">
    <conflict type="frameshift">
        <sequence resource="EMBL-CDS" id="CAA50808"/>
    </conflict>
</comment>
<gene>
    <name type="ordered locus">Mal-111</name>
    <name type="ORF">g6L</name>
</gene>
<reference key="1">
    <citation type="journal article" date="1994" name="J. Gen. Virol.">
        <title>Nucleotide sequence of a 55 kbp region from the right end of the genome of a pathogenic African swine fever virus isolate (Malawi LIL20/1).</title>
        <authorList>
            <person name="Dixon L.K."/>
            <person name="Twigg S.R.F."/>
            <person name="Baylis S.A."/>
            <person name="Vydelingum S."/>
            <person name="Bristow C."/>
            <person name="Hammond J.M."/>
            <person name="Smith G.L."/>
        </authorList>
    </citation>
    <scope>NUCLEOTIDE SEQUENCE [GENOMIC DNA]</scope>
</reference>
<reference key="2">
    <citation type="submission" date="2003-03" db="EMBL/GenBank/DDBJ databases">
        <title>African swine fever virus genomes.</title>
        <authorList>
            <person name="Kutish G.F."/>
            <person name="Rock D.L."/>
        </authorList>
    </citation>
    <scope>NUCLEOTIDE SEQUENCE [LARGE SCALE GENOMIC DNA]</scope>
</reference>
<dbReference type="EMBL" id="X71982">
    <property type="protein sequence ID" value="CAA50808.1"/>
    <property type="status" value="ALT_FRAME"/>
    <property type="molecule type" value="Genomic_DNA"/>
</dbReference>
<dbReference type="EMBL" id="AY261361">
    <property type="status" value="NOT_ANNOTATED_CDS"/>
    <property type="molecule type" value="Genomic_DNA"/>
</dbReference>
<dbReference type="Proteomes" id="UP000000860">
    <property type="component" value="Segment"/>
</dbReference>
<protein>
    <recommendedName>
        <fullName>Uncharacterized protein D129L</fullName>
        <shortName>pD129L</shortName>
    </recommendedName>
</protein>
<name>VFD29_ASFM2</name>
<organismHost>
    <name type="scientific">Ornithodoros</name>
    <name type="common">relapsing fever ticks</name>
    <dbReference type="NCBI Taxonomy" id="6937"/>
</organismHost>
<organismHost>
    <name type="scientific">Phacochoerus aethiopicus</name>
    <name type="common">Warthog</name>
    <dbReference type="NCBI Taxonomy" id="85517"/>
</organismHost>
<organismHost>
    <name type="scientific">Phacochoerus africanus</name>
    <name type="common">Warthog</name>
    <dbReference type="NCBI Taxonomy" id="41426"/>
</organismHost>
<organismHost>
    <name type="scientific">Potamochoerus larvatus</name>
    <name type="common">Bushpig</name>
    <dbReference type="NCBI Taxonomy" id="273792"/>
</organismHost>
<organismHost>
    <name type="scientific">Sus scrofa</name>
    <name type="common">Pig</name>
    <dbReference type="NCBI Taxonomy" id="9823"/>
</organismHost>